<dbReference type="EMBL" id="AE005174">
    <property type="protein sequence ID" value="AAG58303.1"/>
    <property type="molecule type" value="Genomic_DNA"/>
</dbReference>
<dbReference type="EMBL" id="BA000007">
    <property type="protein sequence ID" value="BAB37471.1"/>
    <property type="molecule type" value="Genomic_DNA"/>
</dbReference>
<dbReference type="PIR" id="C85980">
    <property type="entry name" value="C85980"/>
</dbReference>
<dbReference type="PIR" id="H91134">
    <property type="entry name" value="H91134"/>
</dbReference>
<dbReference type="RefSeq" id="NP_312075.1">
    <property type="nucleotide sequence ID" value="NC_002695.1"/>
</dbReference>
<dbReference type="RefSeq" id="WP_001040205.1">
    <property type="nucleotide sequence ID" value="NZ_VOAI01000014.1"/>
</dbReference>
<dbReference type="SMR" id="P0A7G4"/>
<dbReference type="STRING" id="155864.Z4528"/>
<dbReference type="GeneID" id="916109"/>
<dbReference type="GeneID" id="93778816"/>
<dbReference type="KEGG" id="ece:Z4528"/>
<dbReference type="KEGG" id="ecs:ECs_4048"/>
<dbReference type="PATRIC" id="fig|386585.9.peg.4227"/>
<dbReference type="eggNOG" id="COG0858">
    <property type="taxonomic scope" value="Bacteria"/>
</dbReference>
<dbReference type="HOGENOM" id="CLU_089475_5_0_6"/>
<dbReference type="OMA" id="QHAKIFV"/>
<dbReference type="Proteomes" id="UP000000558">
    <property type="component" value="Chromosome"/>
</dbReference>
<dbReference type="Proteomes" id="UP000002519">
    <property type="component" value="Chromosome"/>
</dbReference>
<dbReference type="GO" id="GO:0005829">
    <property type="term" value="C:cytosol"/>
    <property type="evidence" value="ECO:0007669"/>
    <property type="project" value="TreeGrafter"/>
</dbReference>
<dbReference type="GO" id="GO:0043024">
    <property type="term" value="F:ribosomal small subunit binding"/>
    <property type="evidence" value="ECO:0007669"/>
    <property type="project" value="TreeGrafter"/>
</dbReference>
<dbReference type="GO" id="GO:0030490">
    <property type="term" value="P:maturation of SSU-rRNA"/>
    <property type="evidence" value="ECO:0007669"/>
    <property type="project" value="UniProtKB-UniRule"/>
</dbReference>
<dbReference type="FunFam" id="3.30.300.20:FF:000007">
    <property type="entry name" value="Ribosome-binding factor A"/>
    <property type="match status" value="1"/>
</dbReference>
<dbReference type="Gene3D" id="3.30.300.20">
    <property type="match status" value="1"/>
</dbReference>
<dbReference type="HAMAP" id="MF_00003">
    <property type="entry name" value="RbfA"/>
    <property type="match status" value="1"/>
</dbReference>
<dbReference type="InterPro" id="IPR015946">
    <property type="entry name" value="KH_dom-like_a/b"/>
</dbReference>
<dbReference type="InterPro" id="IPR000238">
    <property type="entry name" value="RbfA"/>
</dbReference>
<dbReference type="InterPro" id="IPR023799">
    <property type="entry name" value="RbfA_dom_sf"/>
</dbReference>
<dbReference type="InterPro" id="IPR020053">
    <property type="entry name" value="Ribosome-bd_factorA_CS"/>
</dbReference>
<dbReference type="NCBIfam" id="TIGR00082">
    <property type="entry name" value="rbfA"/>
    <property type="match status" value="1"/>
</dbReference>
<dbReference type="PANTHER" id="PTHR33515">
    <property type="entry name" value="RIBOSOME-BINDING FACTOR A, CHLOROPLASTIC-RELATED"/>
    <property type="match status" value="1"/>
</dbReference>
<dbReference type="PANTHER" id="PTHR33515:SF1">
    <property type="entry name" value="RIBOSOME-BINDING FACTOR A, CHLOROPLASTIC-RELATED"/>
    <property type="match status" value="1"/>
</dbReference>
<dbReference type="Pfam" id="PF02033">
    <property type="entry name" value="RBFA"/>
    <property type="match status" value="1"/>
</dbReference>
<dbReference type="SUPFAM" id="SSF89919">
    <property type="entry name" value="Ribosome-binding factor A, RbfA"/>
    <property type="match status" value="1"/>
</dbReference>
<dbReference type="PROSITE" id="PS01319">
    <property type="entry name" value="RBFA"/>
    <property type="match status" value="1"/>
</dbReference>
<proteinExistence type="inferred from homology"/>
<name>RBFA_ECO57</name>
<accession>P0A7G4</accession>
<accession>P09170</accession>
<feature type="initiator methionine" description="Removed" evidence="1">
    <location>
        <position position="1"/>
    </location>
</feature>
<feature type="chain" id="PRO_0000102659" description="Ribosome-binding factor A">
    <location>
        <begin position="2"/>
        <end position="133"/>
    </location>
</feature>
<evidence type="ECO:0000250" key="1"/>
<evidence type="ECO:0000255" key="2">
    <source>
        <dbReference type="HAMAP-Rule" id="MF_00003"/>
    </source>
</evidence>
<comment type="function">
    <text evidence="2">One of several proteins that assist in the late maturation steps of the functional core of the 30S ribosomal subunit. Associates with free 30S ribosomal subunits (but not with 30S subunits that are part of 70S ribosomes or polysomes). Required for efficient processing of 16S rRNA. May interact with the 5'-terminal helix region of 16S rRNA.</text>
</comment>
<comment type="subunit">
    <text evidence="2">Monomer. Binds 30S ribosomal subunits, but not 50S ribosomal subunits or 70S ribosomes.</text>
</comment>
<comment type="subcellular location">
    <subcellularLocation>
        <location evidence="2">Cytoplasm</location>
    </subcellularLocation>
</comment>
<comment type="similarity">
    <text evidence="2">Belongs to the RbfA family.</text>
</comment>
<gene>
    <name evidence="2" type="primary">rbfA</name>
    <name type="ordered locus">Z4528</name>
    <name type="ordered locus">ECs4048</name>
</gene>
<reference key="1">
    <citation type="journal article" date="2001" name="Nature">
        <title>Genome sequence of enterohaemorrhagic Escherichia coli O157:H7.</title>
        <authorList>
            <person name="Perna N.T."/>
            <person name="Plunkett G. III"/>
            <person name="Burland V."/>
            <person name="Mau B."/>
            <person name="Glasner J.D."/>
            <person name="Rose D.J."/>
            <person name="Mayhew G.F."/>
            <person name="Evans P.S."/>
            <person name="Gregor J."/>
            <person name="Kirkpatrick H.A."/>
            <person name="Posfai G."/>
            <person name="Hackett J."/>
            <person name="Klink S."/>
            <person name="Boutin A."/>
            <person name="Shao Y."/>
            <person name="Miller L."/>
            <person name="Grotbeck E.J."/>
            <person name="Davis N.W."/>
            <person name="Lim A."/>
            <person name="Dimalanta E.T."/>
            <person name="Potamousis K."/>
            <person name="Apodaca J."/>
            <person name="Anantharaman T.S."/>
            <person name="Lin J."/>
            <person name="Yen G."/>
            <person name="Schwartz D.C."/>
            <person name="Welch R.A."/>
            <person name="Blattner F.R."/>
        </authorList>
    </citation>
    <scope>NUCLEOTIDE SEQUENCE [LARGE SCALE GENOMIC DNA]</scope>
    <source>
        <strain>O157:H7 / EDL933 / ATCC 700927 / EHEC</strain>
    </source>
</reference>
<reference key="2">
    <citation type="journal article" date="2001" name="DNA Res.">
        <title>Complete genome sequence of enterohemorrhagic Escherichia coli O157:H7 and genomic comparison with a laboratory strain K-12.</title>
        <authorList>
            <person name="Hayashi T."/>
            <person name="Makino K."/>
            <person name="Ohnishi M."/>
            <person name="Kurokawa K."/>
            <person name="Ishii K."/>
            <person name="Yokoyama K."/>
            <person name="Han C.-G."/>
            <person name="Ohtsubo E."/>
            <person name="Nakayama K."/>
            <person name="Murata T."/>
            <person name="Tanaka M."/>
            <person name="Tobe T."/>
            <person name="Iida T."/>
            <person name="Takami H."/>
            <person name="Honda T."/>
            <person name="Sasakawa C."/>
            <person name="Ogasawara N."/>
            <person name="Yasunaga T."/>
            <person name="Kuhara S."/>
            <person name="Shiba T."/>
            <person name="Hattori M."/>
            <person name="Shinagawa H."/>
        </authorList>
    </citation>
    <scope>NUCLEOTIDE SEQUENCE [LARGE SCALE GENOMIC DNA]</scope>
    <source>
        <strain>O157:H7 / Sakai / RIMD 0509952 / EHEC</strain>
    </source>
</reference>
<organism>
    <name type="scientific">Escherichia coli O157:H7</name>
    <dbReference type="NCBI Taxonomy" id="83334"/>
    <lineage>
        <taxon>Bacteria</taxon>
        <taxon>Pseudomonadati</taxon>
        <taxon>Pseudomonadota</taxon>
        <taxon>Gammaproteobacteria</taxon>
        <taxon>Enterobacterales</taxon>
        <taxon>Enterobacteriaceae</taxon>
        <taxon>Escherichia</taxon>
    </lineage>
</organism>
<protein>
    <recommendedName>
        <fullName evidence="2">Ribosome-binding factor A</fullName>
    </recommendedName>
</protein>
<keyword id="KW-0963">Cytoplasm</keyword>
<keyword id="KW-1185">Reference proteome</keyword>
<keyword id="KW-0690">Ribosome biogenesis</keyword>
<sequence length="133" mass="15154">MAKEFGRPQRVAQEMQKEIALILQREIKDPRLGMMTTVSGVEMSRDLAYAKVYVTFLNDKDEDAVKAGIKALQEASGFIRSLLGKAMRLRIVPELTFFYDNSLVEGMRMSNLVTSVVKHDEERRVNPDDSKED</sequence>